<reference key="1">
    <citation type="journal article" date="1991" name="Yeast">
        <title>The open reading frame YCR101 located on chromosome III from Saccharomyces cerevisiae is a putative protein kinase.</title>
        <authorList>
            <person name="Skala J."/>
            <person name="Purnelle B."/>
            <person name="Crouzet M."/>
            <person name="Aigle M."/>
            <person name="Goffeau A."/>
        </authorList>
    </citation>
    <scope>NUCLEOTIDE SEQUENCE [GENOMIC DNA]</scope>
</reference>
<reference key="2">
    <citation type="journal article" date="1992" name="Nature">
        <title>The complete DNA sequence of yeast chromosome III.</title>
        <authorList>
            <person name="Oliver S.G."/>
            <person name="van der Aart Q.J.M."/>
            <person name="Agostoni-Carbone M.L."/>
            <person name="Aigle M."/>
            <person name="Alberghina L."/>
            <person name="Alexandraki D."/>
            <person name="Antoine G."/>
            <person name="Anwar R."/>
            <person name="Ballesta J.P.G."/>
            <person name="Benit P."/>
            <person name="Berben G."/>
            <person name="Bergantino E."/>
            <person name="Biteau N."/>
            <person name="Bolle P.-A."/>
            <person name="Bolotin-Fukuhara M."/>
            <person name="Brown A."/>
            <person name="Brown A.J.P."/>
            <person name="Buhler J.-M."/>
            <person name="Carcano C."/>
            <person name="Carignani G."/>
            <person name="Cederberg H."/>
            <person name="Chanet R."/>
            <person name="Contreras R."/>
            <person name="Crouzet M."/>
            <person name="Daignan-Fornier B."/>
            <person name="Defoor E."/>
            <person name="Delgado M.D."/>
            <person name="Demolder J."/>
            <person name="Doira C."/>
            <person name="Dubois E."/>
            <person name="Dujon B."/>
            <person name="Duesterhoeft A."/>
            <person name="Erdmann D."/>
            <person name="Esteban M."/>
            <person name="Fabre F."/>
            <person name="Fairhead C."/>
            <person name="Faye G."/>
            <person name="Feldmann H."/>
            <person name="Fiers W."/>
            <person name="Francingues-Gaillard M.-C."/>
            <person name="Franco L."/>
            <person name="Frontali L."/>
            <person name="Fukuhara H."/>
            <person name="Fuller L.J."/>
            <person name="Galland P."/>
            <person name="Gent M.E."/>
            <person name="Gigot D."/>
            <person name="Gilliquet V."/>
            <person name="Glansdorff N."/>
            <person name="Goffeau A."/>
            <person name="Grenson M."/>
            <person name="Grisanti P."/>
            <person name="Grivell L.A."/>
            <person name="de Haan M."/>
            <person name="Haasemann M."/>
            <person name="Hatat D."/>
            <person name="Hoenicka J."/>
            <person name="Hegemann J.H."/>
            <person name="Herbert C.J."/>
            <person name="Hilger F."/>
            <person name="Hohmann S."/>
            <person name="Hollenberg C.P."/>
            <person name="Huse K."/>
            <person name="Iborra F."/>
            <person name="Indge K.J."/>
            <person name="Isono K."/>
            <person name="Jacq C."/>
            <person name="Jacquet M."/>
            <person name="James C.M."/>
            <person name="Jauniaux J.-C."/>
            <person name="Jia Y."/>
            <person name="Jimenez A."/>
            <person name="Kelly A."/>
            <person name="Kleinhans U."/>
            <person name="Kreisl P."/>
            <person name="Lanfranchi G."/>
            <person name="Lewis C."/>
            <person name="van der Linden C.G."/>
            <person name="Lucchini G."/>
            <person name="Lutzenkirchen K."/>
            <person name="Maat M.J."/>
            <person name="Mallet L."/>
            <person name="Mannhaupt G."/>
            <person name="Martegani E."/>
            <person name="Mathieu A."/>
            <person name="Maurer C.T.C."/>
            <person name="McConnell D."/>
            <person name="McKee R.A."/>
            <person name="Messenguy F."/>
            <person name="Mewes H.-W."/>
            <person name="Molemans F."/>
            <person name="Montague M.A."/>
            <person name="Muzi Falconi M."/>
            <person name="Navas L."/>
            <person name="Newlon C.S."/>
            <person name="Noone D."/>
            <person name="Pallier C."/>
            <person name="Panzeri L."/>
            <person name="Pearson B.M."/>
            <person name="Perea J."/>
            <person name="Philippsen P."/>
            <person name="Pierard A."/>
            <person name="Planta R.J."/>
            <person name="Plevani P."/>
            <person name="Poetsch B."/>
            <person name="Pohl F.M."/>
            <person name="Purnelle B."/>
            <person name="Ramezani Rad M."/>
            <person name="Rasmussen S.W."/>
            <person name="Raynal A."/>
            <person name="Remacha M.A."/>
            <person name="Richterich P."/>
            <person name="Roberts A.B."/>
            <person name="Rodriguez F."/>
            <person name="Sanz E."/>
            <person name="Schaaff-Gerstenschlaeger I."/>
            <person name="Scherens B."/>
            <person name="Schweitzer B."/>
            <person name="Shu Y."/>
            <person name="Skala J."/>
            <person name="Slonimski P.P."/>
            <person name="Sor F."/>
            <person name="Soustelle C."/>
            <person name="Spiegelberg R."/>
            <person name="Stateva L.I."/>
            <person name="Steensma H.Y."/>
            <person name="Steiner S."/>
            <person name="Thierry A."/>
            <person name="Thireos G."/>
            <person name="Tzermia M."/>
            <person name="Urrestarazu L.A."/>
            <person name="Valle G."/>
            <person name="Vetter I."/>
            <person name="van Vliet-Reedijk J.C."/>
            <person name="Voet M."/>
            <person name="Volckaert G."/>
            <person name="Vreken P."/>
            <person name="Wang H."/>
            <person name="Warmington J.R."/>
            <person name="von Wettstein D."/>
            <person name="Wicksteed B.L."/>
            <person name="Wilson C."/>
            <person name="Wurst H."/>
            <person name="Xu G."/>
            <person name="Yoshikawa A."/>
            <person name="Zimmermann F.K."/>
            <person name="Sgouros J.G."/>
        </authorList>
    </citation>
    <scope>NUCLEOTIDE SEQUENCE [LARGE SCALE GENOMIC DNA]</scope>
    <source>
        <strain>ATCC 204508 / S288c</strain>
    </source>
</reference>
<reference key="3">
    <citation type="journal article" date="2014" name="G3 (Bethesda)">
        <title>The reference genome sequence of Saccharomyces cerevisiae: Then and now.</title>
        <authorList>
            <person name="Engel S.R."/>
            <person name="Dietrich F.S."/>
            <person name="Fisk D.G."/>
            <person name="Binkley G."/>
            <person name="Balakrishnan R."/>
            <person name="Costanzo M.C."/>
            <person name="Dwight S.S."/>
            <person name="Hitz B.C."/>
            <person name="Karra K."/>
            <person name="Nash R.S."/>
            <person name="Weng S."/>
            <person name="Wong E.D."/>
            <person name="Lloyd P."/>
            <person name="Skrzypek M.S."/>
            <person name="Miyasato S.R."/>
            <person name="Simison M."/>
            <person name="Cherry J.M."/>
        </authorList>
    </citation>
    <scope>GENOME REANNOTATION</scope>
    <source>
        <strain>ATCC 204508 / S288c</strain>
    </source>
</reference>
<reference key="4">
    <citation type="journal article" date="1992" name="Yeast">
        <title>The complete sequence of a 10.8kb fragment to the right of the chromosome III centromere of Saccharomyces cerevisiae.</title>
        <authorList>
            <person name="Biteau N."/>
            <person name="Fremaux C."/>
            <person name="Hebrard S."/>
            <person name="Menara A."/>
            <person name="Aigle M."/>
            <person name="Crouzet M."/>
        </authorList>
    </citation>
    <scope>NUCLEOTIDE SEQUENCE [GENOMIC DNA] OF 1-240</scope>
</reference>
<reference key="5">
    <citation type="journal article" date="1999" name="Mol. Cell. Biol.">
        <title>A novel mechanism of ion homeostasis and salt tolerance in yeast: the Hal4 and Hal5 protein kinases modulate the Trk1-Trk2 potassium transporter.</title>
        <authorList>
            <person name="Mulet J.M."/>
            <person name="Leube M.P."/>
            <person name="Kron S.J."/>
            <person name="Rios G."/>
            <person name="Fink G.R."/>
            <person name="Serrano R."/>
        </authorList>
    </citation>
    <scope>FUNCTION</scope>
</reference>
<reference key="6">
    <citation type="journal article" date="2003" name="Nature">
        <title>Global analysis of protein expression in yeast.</title>
        <authorList>
            <person name="Ghaemmaghami S."/>
            <person name="Huh W.-K."/>
            <person name="Bower K."/>
            <person name="Howson R.W."/>
            <person name="Belle A."/>
            <person name="Dephoure N."/>
            <person name="O'Shea E.K."/>
            <person name="Weissman J.S."/>
        </authorList>
    </citation>
    <scope>LEVEL OF PROTEIN EXPRESSION [LARGE SCALE ANALYSIS]</scope>
</reference>
<reference key="7">
    <citation type="journal article" date="2007" name="J. Proteome Res.">
        <title>Large-scale phosphorylation analysis of alpha-factor-arrested Saccharomyces cerevisiae.</title>
        <authorList>
            <person name="Li X."/>
            <person name="Gerber S.A."/>
            <person name="Rudner A.D."/>
            <person name="Beausoleil S.A."/>
            <person name="Haas W."/>
            <person name="Villen J."/>
            <person name="Elias J.E."/>
            <person name="Gygi S.P."/>
        </authorList>
    </citation>
    <scope>IDENTIFICATION BY MASS SPECTROMETRY [LARGE SCALE ANALYSIS]</scope>
    <source>
        <strain>ADR376</strain>
    </source>
</reference>
<reference key="8">
    <citation type="journal article" date="2009" name="Science">
        <title>Global analysis of Cdk1 substrate phosphorylation sites provides insights into evolution.</title>
        <authorList>
            <person name="Holt L.J."/>
            <person name="Tuch B.B."/>
            <person name="Villen J."/>
            <person name="Johnson A.D."/>
            <person name="Gygi S.P."/>
            <person name="Morgan D.O."/>
        </authorList>
    </citation>
    <scope>IDENTIFICATION BY MASS SPECTROMETRY [LARGE SCALE ANALYSIS]</scope>
</reference>
<name>HAL4_YEAST</name>
<organism>
    <name type="scientific">Saccharomyces cerevisiae (strain ATCC 204508 / S288c)</name>
    <name type="common">Baker's yeast</name>
    <dbReference type="NCBI Taxonomy" id="559292"/>
    <lineage>
        <taxon>Eukaryota</taxon>
        <taxon>Fungi</taxon>
        <taxon>Dikarya</taxon>
        <taxon>Ascomycota</taxon>
        <taxon>Saccharomycotina</taxon>
        <taxon>Saccharomycetes</taxon>
        <taxon>Saccharomycetales</taxon>
        <taxon>Saccharomycetaceae</taxon>
        <taxon>Saccharomyces</taxon>
    </lineage>
</organism>
<accession>P25333</accession>
<accession>D6VR17</accession>
<protein>
    <recommendedName>
        <fullName>Serine/threonine-protein kinase HAL4/SAT4</fullName>
        <ecNumber>2.7.11.1</ecNumber>
    </recommendedName>
    <alternativeName>
        <fullName>Halotolerance protein 4</fullName>
    </alternativeName>
</protein>
<sequence>MTGMNDNNAAIPQQTPRKHALSSKVMQLFRSGSRSSRQGKASSNIQPPSNINTNVPSASKSAKFGLHTPTTATPRVVSNPSNTAGVSKPGMYMPEYYQSASPSHSSSSASLNNHIDINTSKSSSAASLTSSVSALSLSPTSAINISSKSLSPKFSHHSNSNTAITPAPTPTASNINNVNKITNTSAPICGRFLVHKDGTHEHHLKNAKRQEKLSTMIKNMVGASKLRGEAKSAVPDIIMDPKTTLKSNKNPPTLFAGFMKQVVDMDDKYPEGAPTSGALNCPERDIYRSDQKDSKNNTHNITTTKKDRQCFAEKYGRCQEVLGKGAFGVVRICQKKNVSSQDGNKSEKLYAVKEFKRRTSESAEKYSKRLTSEFCISSSLHHTNIVTTLDLFQDAKGEYCEVMEYCAGGDLFTLVVAAGKLEYMEADCFFKQLIRGVVYMHEMGVCHRDLKPENLLLTHDGVLKITDFGNSECFKMAWEKNIHLSGGVCGSSPYIAPEEYIKEEFDPRPVDIWACGVIYMAMRTGRQLWSSAEKDDPFYMNYLKGRKEKGGYEPIESLKRARCRNVIYSMLDPVPYRRINGKQILNSEWGREIKCCHNGRALK</sequence>
<evidence type="ECO:0000255" key="1">
    <source>
        <dbReference type="PROSITE-ProRule" id="PRU00159"/>
    </source>
</evidence>
<evidence type="ECO:0000255" key="2">
    <source>
        <dbReference type="PROSITE-ProRule" id="PRU10027"/>
    </source>
</evidence>
<evidence type="ECO:0000256" key="3">
    <source>
        <dbReference type="SAM" id="MobiDB-lite"/>
    </source>
</evidence>
<evidence type="ECO:0000269" key="4">
    <source>
    </source>
</evidence>
<evidence type="ECO:0000269" key="5">
    <source>
    </source>
</evidence>
<keyword id="KW-0067">ATP-binding</keyword>
<keyword id="KW-0418">Kinase</keyword>
<keyword id="KW-0547">Nucleotide-binding</keyword>
<keyword id="KW-1185">Reference proteome</keyword>
<keyword id="KW-0723">Serine/threonine-protein kinase</keyword>
<keyword id="KW-0808">Transferase</keyword>
<comment type="function">
    <text evidence="4">Promotes K(+) uptake, by the potassium transporter TRK1-TRK2, which leads to the subsequent cellular resistance to toxic cations such as Na(+), Li(+) and Ca(2+).</text>
</comment>
<comment type="catalytic activity">
    <reaction>
        <text>L-seryl-[protein] + ATP = O-phospho-L-seryl-[protein] + ADP + H(+)</text>
        <dbReference type="Rhea" id="RHEA:17989"/>
        <dbReference type="Rhea" id="RHEA-COMP:9863"/>
        <dbReference type="Rhea" id="RHEA-COMP:11604"/>
        <dbReference type="ChEBI" id="CHEBI:15378"/>
        <dbReference type="ChEBI" id="CHEBI:29999"/>
        <dbReference type="ChEBI" id="CHEBI:30616"/>
        <dbReference type="ChEBI" id="CHEBI:83421"/>
        <dbReference type="ChEBI" id="CHEBI:456216"/>
        <dbReference type="EC" id="2.7.11.1"/>
    </reaction>
</comment>
<comment type="catalytic activity">
    <reaction>
        <text>L-threonyl-[protein] + ATP = O-phospho-L-threonyl-[protein] + ADP + H(+)</text>
        <dbReference type="Rhea" id="RHEA:46608"/>
        <dbReference type="Rhea" id="RHEA-COMP:11060"/>
        <dbReference type="Rhea" id="RHEA-COMP:11605"/>
        <dbReference type="ChEBI" id="CHEBI:15378"/>
        <dbReference type="ChEBI" id="CHEBI:30013"/>
        <dbReference type="ChEBI" id="CHEBI:30616"/>
        <dbReference type="ChEBI" id="CHEBI:61977"/>
        <dbReference type="ChEBI" id="CHEBI:456216"/>
        <dbReference type="EC" id="2.7.11.1"/>
    </reaction>
</comment>
<comment type="miscellaneous">
    <text evidence="5">Present with 1030 molecules/cell in log phase SD medium.</text>
</comment>
<comment type="similarity">
    <text evidence="1">Belongs to the protein kinase superfamily. Ser/Thr protein kinase family.</text>
</comment>
<feature type="chain" id="PRO_0000085987" description="Serine/threonine-protein kinase HAL4/SAT4">
    <location>
        <begin position="1"/>
        <end position="603"/>
    </location>
</feature>
<feature type="domain" description="Protein kinase" evidence="1">
    <location>
        <begin position="316"/>
        <end position="590"/>
    </location>
</feature>
<feature type="region of interest" description="Disordered" evidence="3">
    <location>
        <begin position="1"/>
        <end position="86"/>
    </location>
</feature>
<feature type="region of interest" description="Disordered" evidence="3">
    <location>
        <begin position="150"/>
        <end position="171"/>
    </location>
</feature>
<feature type="region of interest" description="Disordered" evidence="3">
    <location>
        <begin position="267"/>
        <end position="301"/>
    </location>
</feature>
<feature type="compositionally biased region" description="Polar residues" evidence="3">
    <location>
        <begin position="1"/>
        <end position="15"/>
    </location>
</feature>
<feature type="compositionally biased region" description="Polar residues" evidence="3">
    <location>
        <begin position="30"/>
        <end position="60"/>
    </location>
</feature>
<feature type="compositionally biased region" description="Polar residues" evidence="3">
    <location>
        <begin position="68"/>
        <end position="85"/>
    </location>
</feature>
<feature type="compositionally biased region" description="Low complexity" evidence="3">
    <location>
        <begin position="159"/>
        <end position="171"/>
    </location>
</feature>
<feature type="compositionally biased region" description="Basic and acidic residues" evidence="3">
    <location>
        <begin position="282"/>
        <end position="296"/>
    </location>
</feature>
<feature type="active site" description="Proton acceptor" evidence="1 2">
    <location>
        <position position="449"/>
    </location>
</feature>
<feature type="binding site" evidence="1">
    <location>
        <begin position="322"/>
        <end position="330"/>
    </location>
    <ligand>
        <name>ATP</name>
        <dbReference type="ChEBI" id="CHEBI:30616"/>
    </ligand>
</feature>
<feature type="binding site" evidence="1">
    <location>
        <position position="353"/>
    </location>
    <ligand>
        <name>ATP</name>
        <dbReference type="ChEBI" id="CHEBI:30616"/>
    </ligand>
</feature>
<proteinExistence type="evidence at protein level"/>
<gene>
    <name type="primary">SAT4</name>
    <name type="synonym">HAL4</name>
    <name type="ordered locus">YCR008W</name>
    <name type="ORF">YCR046</name>
    <name type="ORF">YCR101</name>
    <name type="ORF">YCR8W</name>
</gene>
<dbReference type="EC" id="2.7.11.1"/>
<dbReference type="EMBL" id="S76380">
    <property type="protein sequence ID" value="AAB20894.1"/>
    <property type="molecule type" value="Genomic_DNA"/>
</dbReference>
<dbReference type="EMBL" id="X59720">
    <property type="protein sequence ID" value="CAA42325.1"/>
    <property type="molecule type" value="Genomic_DNA"/>
</dbReference>
<dbReference type="EMBL" id="Z11114">
    <property type="protein sequence ID" value="CAA77445.1"/>
    <property type="molecule type" value="Genomic_DNA"/>
</dbReference>
<dbReference type="EMBL" id="BK006937">
    <property type="protein sequence ID" value="DAA07486.1"/>
    <property type="molecule type" value="Genomic_DNA"/>
</dbReference>
<dbReference type="PIR" id="S17470">
    <property type="entry name" value="OKBY8W"/>
</dbReference>
<dbReference type="RefSeq" id="NP_009934.1">
    <property type="nucleotide sequence ID" value="NM_001178721.1"/>
</dbReference>
<dbReference type="SMR" id="P25333"/>
<dbReference type="BioGRID" id="30987">
    <property type="interactions" value="248"/>
</dbReference>
<dbReference type="DIP" id="DIP-4495N"/>
<dbReference type="FunCoup" id="P25333">
    <property type="interactions" value="252"/>
</dbReference>
<dbReference type="IntAct" id="P25333">
    <property type="interactions" value="6"/>
</dbReference>
<dbReference type="MINT" id="P25333"/>
<dbReference type="STRING" id="4932.YCR008W"/>
<dbReference type="GlyGen" id="P25333">
    <property type="glycosylation" value="3 sites"/>
</dbReference>
<dbReference type="iPTMnet" id="P25333"/>
<dbReference type="PaxDb" id="4932-YCR008W"/>
<dbReference type="PeptideAtlas" id="P25333"/>
<dbReference type="EnsemblFungi" id="YCR008W_mRNA">
    <property type="protein sequence ID" value="YCR008W"/>
    <property type="gene ID" value="YCR008W"/>
</dbReference>
<dbReference type="GeneID" id="850366"/>
<dbReference type="KEGG" id="sce:YCR008W"/>
<dbReference type="AGR" id="SGD:S000000601"/>
<dbReference type="SGD" id="S000000601">
    <property type="gene designation" value="SAT4"/>
</dbReference>
<dbReference type="VEuPathDB" id="FungiDB:YCR008W"/>
<dbReference type="eggNOG" id="KOG0590">
    <property type="taxonomic scope" value="Eukaryota"/>
</dbReference>
<dbReference type="HOGENOM" id="CLU_000288_127_1_1"/>
<dbReference type="InParanoid" id="P25333"/>
<dbReference type="OMA" id="MHEMGVC"/>
<dbReference type="OrthoDB" id="6513151at2759"/>
<dbReference type="BioCyc" id="YEAST:G3O-29325-MONOMER"/>
<dbReference type="BRENDA" id="2.7.11.1">
    <property type="organism ID" value="984"/>
</dbReference>
<dbReference type="BioGRID-ORCS" id="850366">
    <property type="hits" value="0 hits in 13 CRISPR screens"/>
</dbReference>
<dbReference type="PRO" id="PR:P25333"/>
<dbReference type="Proteomes" id="UP000002311">
    <property type="component" value="Chromosome III"/>
</dbReference>
<dbReference type="RNAct" id="P25333">
    <property type="molecule type" value="protein"/>
</dbReference>
<dbReference type="GO" id="GO:0005737">
    <property type="term" value="C:cytoplasm"/>
    <property type="evidence" value="ECO:0000314"/>
    <property type="project" value="SGD"/>
</dbReference>
<dbReference type="GO" id="GO:0005739">
    <property type="term" value="C:mitochondrion"/>
    <property type="evidence" value="ECO:0000314"/>
    <property type="project" value="SGD"/>
</dbReference>
<dbReference type="GO" id="GO:0005524">
    <property type="term" value="F:ATP binding"/>
    <property type="evidence" value="ECO:0007669"/>
    <property type="project" value="UniProtKB-KW"/>
</dbReference>
<dbReference type="GO" id="GO:0004672">
    <property type="term" value="F:protein kinase activity"/>
    <property type="evidence" value="ECO:0007005"/>
    <property type="project" value="SGD"/>
</dbReference>
<dbReference type="GO" id="GO:0106310">
    <property type="term" value="F:protein serine kinase activity"/>
    <property type="evidence" value="ECO:0007669"/>
    <property type="project" value="RHEA"/>
</dbReference>
<dbReference type="GO" id="GO:0004674">
    <property type="term" value="F:protein serine/threonine kinase activity"/>
    <property type="evidence" value="ECO:0000318"/>
    <property type="project" value="GO_Central"/>
</dbReference>
<dbReference type="GO" id="GO:0000082">
    <property type="term" value="P:G1/S transition of mitotic cell cycle"/>
    <property type="evidence" value="ECO:0000316"/>
    <property type="project" value="SGD"/>
</dbReference>
<dbReference type="GO" id="GO:0030003">
    <property type="term" value="P:intracellular monoatomic cation homeostasis"/>
    <property type="evidence" value="ECO:0000315"/>
    <property type="project" value="SGD"/>
</dbReference>
<dbReference type="GO" id="GO:0045807">
    <property type="term" value="P:positive regulation of endocytosis"/>
    <property type="evidence" value="ECO:0000315"/>
    <property type="project" value="SGD"/>
</dbReference>
<dbReference type="GO" id="GO:0008104">
    <property type="term" value="P:protein localization"/>
    <property type="evidence" value="ECO:0000316"/>
    <property type="project" value="SGD"/>
</dbReference>
<dbReference type="GO" id="GO:1903329">
    <property type="term" value="P:regulation of iron-sulfur cluster assembly"/>
    <property type="evidence" value="ECO:0000315"/>
    <property type="project" value="SGD"/>
</dbReference>
<dbReference type="CDD" id="cd13994">
    <property type="entry name" value="STKc_HAL4_like"/>
    <property type="match status" value="1"/>
</dbReference>
<dbReference type="FunFam" id="1.10.510.10:FF:000183">
    <property type="entry name" value="Serine/threonine-protein kinase hal4"/>
    <property type="match status" value="1"/>
</dbReference>
<dbReference type="Gene3D" id="1.10.510.10">
    <property type="entry name" value="Transferase(Phosphotransferase) domain 1"/>
    <property type="match status" value="1"/>
</dbReference>
<dbReference type="InterPro" id="IPR011009">
    <property type="entry name" value="Kinase-like_dom_sf"/>
</dbReference>
<dbReference type="InterPro" id="IPR000719">
    <property type="entry name" value="Prot_kinase_dom"/>
</dbReference>
<dbReference type="InterPro" id="IPR017441">
    <property type="entry name" value="Protein_kinase_ATP_BS"/>
</dbReference>
<dbReference type="InterPro" id="IPR008271">
    <property type="entry name" value="Ser/Thr_kinase_AS"/>
</dbReference>
<dbReference type="PANTHER" id="PTHR24343:SF558">
    <property type="entry name" value="PROTEIN KINASE DOMAIN-CONTAINING PROTEIN"/>
    <property type="match status" value="1"/>
</dbReference>
<dbReference type="PANTHER" id="PTHR24343">
    <property type="entry name" value="SERINE/THREONINE KINASE"/>
    <property type="match status" value="1"/>
</dbReference>
<dbReference type="Pfam" id="PF00069">
    <property type="entry name" value="Pkinase"/>
    <property type="match status" value="1"/>
</dbReference>
<dbReference type="SMART" id="SM00220">
    <property type="entry name" value="S_TKc"/>
    <property type="match status" value="1"/>
</dbReference>
<dbReference type="SUPFAM" id="SSF56112">
    <property type="entry name" value="Protein kinase-like (PK-like)"/>
    <property type="match status" value="1"/>
</dbReference>
<dbReference type="PROSITE" id="PS00107">
    <property type="entry name" value="PROTEIN_KINASE_ATP"/>
    <property type="match status" value="1"/>
</dbReference>
<dbReference type="PROSITE" id="PS50011">
    <property type="entry name" value="PROTEIN_KINASE_DOM"/>
    <property type="match status" value="1"/>
</dbReference>
<dbReference type="PROSITE" id="PS00108">
    <property type="entry name" value="PROTEIN_KINASE_ST"/>
    <property type="match status" value="1"/>
</dbReference>